<sequence length="687" mass="74313">MARPRRASTATTMQLGLLLAALLLFTSSLAGSVAAAAPPPPAGAKGGGAKSGGGGGTVIGIDLGTTYSCVGVYRNDRVEIIANDQGNRITPSWVAFTDGGERLIGEAAKNQAAANPERTIYDAKRLIGRQFSDAEVQRDMKLLPFAVVDRNGKPHVRVEVKDGDVRVFSPEEVSAMVLTRMKETAEAYLGEKVTRAVVTVPAYFNDAQRQATKDAGVIAGLTVDRIINEPTAAAIAYGIDKKGAEKNVLVFDLGGGTFDVSILAIDNGVFEVLATNGDTHLGGEDFDQRLMDHFVKVIRRKHGRDIAGDARALGKLRRECERAKRALSNQHQVRVEIESLFDGVDFSEPLSRARFEELNGDLFKKTMVPVRKAMADAGLGKGDIDEIVLVGGSTRIPKVQQLLKDYFGGKEPNRGVNPDEAVAYGAAVQASIISGHVDENTESMILLDVAPLTLGLETAGGVMTKLIPRNTVVPTKKTQVFTTYKDRQTTVTIQVFEGERSMTRDNRLLGKFDLTGIAPAPRGAPQIAVTFEVDANGILSVLAADKATGRSEKITISGDDRKISQEEIDRMVREAEEFADEDRRHREQVDARNSLEAYVYNVKSTLGGKMADAMEGEEKEKVEEAVREAHEWLDGNPDAGKEEYEEKLRELEDVCNPVMSAVYQRSGGGGGAPEDGNVDDEDDHDEL</sequence>
<protein>
    <recommendedName>
        <fullName evidence="8">Heat shock 70 kDa protein BIP4</fullName>
    </recommendedName>
    <alternativeName>
        <fullName evidence="8">Luminal-binding protein 4</fullName>
        <shortName evidence="7">OsBiP4</shortName>
    </alternativeName>
</protein>
<comment type="function">
    <text evidence="1">Functions as a chaperone during endoplasmic reticulum (ER) stress response.</text>
</comment>
<comment type="subcellular location">
    <subcellularLocation>
        <location evidence="3">Endoplasmic reticulum</location>
    </subcellularLocation>
</comment>
<comment type="induction">
    <text evidence="5 6">By dithiothreitol-induced endoplasmic reticulum (ER) stress response (PubMed:22050533, PubMed:24153418). Induced by tunicamycin-induced ER stress response (PubMed:24153418).</text>
</comment>
<comment type="similarity">
    <text evidence="8">Belongs to the heat shock protein 70 family.</text>
</comment>
<feature type="signal peptide" evidence="2">
    <location>
        <begin position="1"/>
        <end position="30"/>
    </location>
</feature>
<feature type="chain" id="PRO_5008176954" description="Heat shock 70 kDa protein BIP4">
    <location>
        <begin position="31"/>
        <end position="687"/>
    </location>
</feature>
<feature type="region of interest" description="Disordered" evidence="4">
    <location>
        <begin position="662"/>
        <end position="687"/>
    </location>
</feature>
<feature type="short sequence motif" description="Prevents secretion from ER" evidence="3">
    <location>
        <begin position="684"/>
        <end position="687"/>
    </location>
</feature>
<feature type="compositionally biased region" description="Acidic residues" evidence="4">
    <location>
        <begin position="676"/>
        <end position="687"/>
    </location>
</feature>
<reference key="1">
    <citation type="journal article" date="2005" name="Mol. Genet. Genomics">
        <title>A fine physical map of the rice chromosome 5.</title>
        <authorList>
            <person name="Cheng C.-H."/>
            <person name="Chung M.C."/>
            <person name="Liu S.-M."/>
            <person name="Chen S.-K."/>
            <person name="Kao F.Y."/>
            <person name="Lin S.-J."/>
            <person name="Hsiao S.-H."/>
            <person name="Tseng I.C."/>
            <person name="Hsing Y.-I.C."/>
            <person name="Wu H.-P."/>
            <person name="Chen C.-S."/>
            <person name="Shaw J.-F."/>
            <person name="Wu J."/>
            <person name="Matsumoto T."/>
            <person name="Sasaki T."/>
            <person name="Chen H.-C."/>
            <person name="Chow T.-Y."/>
        </authorList>
    </citation>
    <scope>NUCLEOTIDE SEQUENCE [LARGE SCALE GENOMIC DNA]</scope>
    <source>
        <strain>cv. Nipponbare</strain>
    </source>
</reference>
<reference key="2">
    <citation type="journal article" date="2005" name="Nature">
        <title>The map-based sequence of the rice genome.</title>
        <authorList>
            <consortium name="International rice genome sequencing project (IRGSP)"/>
        </authorList>
    </citation>
    <scope>NUCLEOTIDE SEQUENCE [LARGE SCALE GENOMIC DNA]</scope>
    <source>
        <strain>cv. Nipponbare</strain>
    </source>
</reference>
<reference key="3">
    <citation type="journal article" date="2008" name="Nucleic Acids Res.">
        <title>The rice annotation project database (RAP-DB): 2008 update.</title>
        <authorList>
            <consortium name="The rice annotation project (RAP)"/>
        </authorList>
    </citation>
    <scope>GENOME REANNOTATION</scope>
    <source>
        <strain>cv. Nipponbare</strain>
    </source>
</reference>
<reference key="4">
    <citation type="journal article" date="2013" name="Rice">
        <title>Improvement of the Oryza sativa Nipponbare reference genome using next generation sequence and optical map data.</title>
        <authorList>
            <person name="Kawahara Y."/>
            <person name="de la Bastide M."/>
            <person name="Hamilton J.P."/>
            <person name="Kanamori H."/>
            <person name="McCombie W.R."/>
            <person name="Ouyang S."/>
            <person name="Schwartz D.C."/>
            <person name="Tanaka T."/>
            <person name="Wu J."/>
            <person name="Zhou S."/>
            <person name="Childs K.L."/>
            <person name="Davidson R.M."/>
            <person name="Lin H."/>
            <person name="Quesada-Ocampo L."/>
            <person name="Vaillancourt B."/>
            <person name="Sakai H."/>
            <person name="Lee S.S."/>
            <person name="Kim J."/>
            <person name="Numa H."/>
            <person name="Itoh T."/>
            <person name="Buell C.R."/>
            <person name="Matsumoto T."/>
        </authorList>
    </citation>
    <scope>GENOME REANNOTATION</scope>
    <source>
        <strain>cv. Nipponbare</strain>
    </source>
</reference>
<reference key="5">
    <citation type="journal article" date="2012" name="Plant J.">
        <title>Signal transduction by IRE1-mediated splicing of bZIP50 and other stress sensors in the endoplasmic reticulum stress response of rice.</title>
        <authorList>
            <person name="Hayashi S."/>
            <person name="Wakasa Y."/>
            <person name="Takahashi H."/>
            <person name="Kawakatsu T."/>
            <person name="Takaiwa F."/>
        </authorList>
    </citation>
    <scope>INDUCTION BY DITHIOTHREITOL</scope>
    <scope>GENE FAMILY</scope>
    <scope>NOMENCLATURE</scope>
</reference>
<reference key="6">
    <citation type="journal article" date="2013" name="J. Exp. Bot.">
        <title>Analysis of rice ER-resident J-proteins reveals diversity and functional differentiation of the ER-resident Hsp70 system in plants.</title>
        <authorList>
            <person name="Ohta M."/>
            <person name="Wakasa Y."/>
            <person name="Takahashi H."/>
            <person name="Hayashi S."/>
            <person name="Kudo K."/>
            <person name="Takaiwa F."/>
        </authorList>
    </citation>
    <scope>INDUCTION</scope>
</reference>
<gene>
    <name evidence="7" type="primary">BIP4</name>
    <name evidence="11" type="ordered locus">Os05g0428600</name>
    <name evidence="8" type="ordered locus">LOC_Os05g35400</name>
    <name evidence="10" type="ORF">OSJNBb0048I21.2</name>
    <name evidence="9" type="ORF">P0636F09.18</name>
</gene>
<evidence type="ECO:0000250" key="1">
    <source>
        <dbReference type="UniProtKB" id="Q6Z7B0"/>
    </source>
</evidence>
<evidence type="ECO:0000255" key="2"/>
<evidence type="ECO:0000255" key="3">
    <source>
        <dbReference type="PROSITE-ProRule" id="PRU10138"/>
    </source>
</evidence>
<evidence type="ECO:0000256" key="4">
    <source>
        <dbReference type="SAM" id="MobiDB-lite"/>
    </source>
</evidence>
<evidence type="ECO:0000269" key="5">
    <source>
    </source>
</evidence>
<evidence type="ECO:0000269" key="6">
    <source>
    </source>
</evidence>
<evidence type="ECO:0000303" key="7">
    <source>
    </source>
</evidence>
<evidence type="ECO:0000305" key="8"/>
<evidence type="ECO:0000312" key="9">
    <source>
        <dbReference type="EMBL" id="AAS90667.1"/>
    </source>
</evidence>
<evidence type="ECO:0000312" key="10">
    <source>
        <dbReference type="EMBL" id="AAV59416.1"/>
    </source>
</evidence>
<evidence type="ECO:0000312" key="11">
    <source>
        <dbReference type="EMBL" id="BAF17527.1"/>
    </source>
</evidence>
<name>BIP4_ORYSJ</name>
<organism>
    <name type="scientific">Oryza sativa subsp. japonica</name>
    <name type="common">Rice</name>
    <dbReference type="NCBI Taxonomy" id="39947"/>
    <lineage>
        <taxon>Eukaryota</taxon>
        <taxon>Viridiplantae</taxon>
        <taxon>Streptophyta</taxon>
        <taxon>Embryophyta</taxon>
        <taxon>Tracheophyta</taxon>
        <taxon>Spermatophyta</taxon>
        <taxon>Magnoliopsida</taxon>
        <taxon>Liliopsida</taxon>
        <taxon>Poales</taxon>
        <taxon>Poaceae</taxon>
        <taxon>BOP clade</taxon>
        <taxon>Oryzoideae</taxon>
        <taxon>Oryzeae</taxon>
        <taxon>Oryzinae</taxon>
        <taxon>Oryza</taxon>
        <taxon>Oryza sativa</taxon>
    </lineage>
</organism>
<dbReference type="EMBL" id="AC130600">
    <property type="protein sequence ID" value="AAV59416.1"/>
    <property type="molecule type" value="Genomic_DNA"/>
</dbReference>
<dbReference type="EMBL" id="AC135429">
    <property type="protein sequence ID" value="AAS90667.1"/>
    <property type="molecule type" value="Genomic_DNA"/>
</dbReference>
<dbReference type="EMBL" id="AP008211">
    <property type="protein sequence ID" value="BAF17527.1"/>
    <property type="molecule type" value="Genomic_DNA"/>
</dbReference>
<dbReference type="EMBL" id="AP014961">
    <property type="protein sequence ID" value="BAS94137.1"/>
    <property type="molecule type" value="Genomic_DNA"/>
</dbReference>
<dbReference type="RefSeq" id="XP_015638801.1">
    <property type="nucleotide sequence ID" value="XM_015783315.1"/>
</dbReference>
<dbReference type="SMR" id="Q75HQ0"/>
<dbReference type="FunCoup" id="Q75HQ0">
    <property type="interactions" value="2019"/>
</dbReference>
<dbReference type="STRING" id="39947.Q75HQ0"/>
<dbReference type="PaxDb" id="39947-Q75HQ0"/>
<dbReference type="EnsemblPlants" id="Os05t0428600-01">
    <property type="protein sequence ID" value="Os05t0428600-01"/>
    <property type="gene ID" value="Os05g0428600"/>
</dbReference>
<dbReference type="Gramene" id="Os05t0428600-01">
    <property type="protein sequence ID" value="Os05t0428600-01"/>
    <property type="gene ID" value="Os05g0428600"/>
</dbReference>
<dbReference type="KEGG" id="dosa:Os05g0428600"/>
<dbReference type="eggNOG" id="KOG0100">
    <property type="taxonomic scope" value="Eukaryota"/>
</dbReference>
<dbReference type="HOGENOM" id="CLU_005965_2_1_1"/>
<dbReference type="InParanoid" id="Q75HQ0"/>
<dbReference type="OMA" id="EDNIGIC"/>
<dbReference type="OrthoDB" id="2401965at2759"/>
<dbReference type="Proteomes" id="UP000000763">
    <property type="component" value="Chromosome 5"/>
</dbReference>
<dbReference type="Proteomes" id="UP000059680">
    <property type="component" value="Chromosome 5"/>
</dbReference>
<dbReference type="GO" id="GO:0005737">
    <property type="term" value="C:cytoplasm"/>
    <property type="evidence" value="ECO:0000318"/>
    <property type="project" value="GO_Central"/>
</dbReference>
<dbReference type="GO" id="GO:0034663">
    <property type="term" value="C:endoplasmic reticulum chaperone complex"/>
    <property type="evidence" value="ECO:0000318"/>
    <property type="project" value="GO_Central"/>
</dbReference>
<dbReference type="GO" id="GO:0005788">
    <property type="term" value="C:endoplasmic reticulum lumen"/>
    <property type="evidence" value="ECO:0000318"/>
    <property type="project" value="GO_Central"/>
</dbReference>
<dbReference type="GO" id="GO:0016020">
    <property type="term" value="C:membrane"/>
    <property type="evidence" value="ECO:0000318"/>
    <property type="project" value="GO_Central"/>
</dbReference>
<dbReference type="GO" id="GO:0005634">
    <property type="term" value="C:nucleus"/>
    <property type="evidence" value="ECO:0000318"/>
    <property type="project" value="GO_Central"/>
</dbReference>
<dbReference type="GO" id="GO:0005524">
    <property type="term" value="F:ATP binding"/>
    <property type="evidence" value="ECO:0007669"/>
    <property type="project" value="UniProtKB-KW"/>
</dbReference>
<dbReference type="GO" id="GO:0016887">
    <property type="term" value="F:ATP hydrolysis activity"/>
    <property type="evidence" value="ECO:0000318"/>
    <property type="project" value="GO_Central"/>
</dbReference>
<dbReference type="GO" id="GO:0140662">
    <property type="term" value="F:ATP-dependent protein folding chaperone"/>
    <property type="evidence" value="ECO:0007669"/>
    <property type="project" value="InterPro"/>
</dbReference>
<dbReference type="GO" id="GO:0031072">
    <property type="term" value="F:heat shock protein binding"/>
    <property type="evidence" value="ECO:0000318"/>
    <property type="project" value="GO_Central"/>
</dbReference>
<dbReference type="GO" id="GO:0044183">
    <property type="term" value="F:protein folding chaperone"/>
    <property type="evidence" value="ECO:0000318"/>
    <property type="project" value="GO_Central"/>
</dbReference>
<dbReference type="GO" id="GO:0051085">
    <property type="term" value="P:chaperone cofactor-dependent protein refolding"/>
    <property type="evidence" value="ECO:0000318"/>
    <property type="project" value="GO_Central"/>
</dbReference>
<dbReference type="GO" id="GO:0030968">
    <property type="term" value="P:endoplasmic reticulum unfolded protein response"/>
    <property type="evidence" value="ECO:0000318"/>
    <property type="project" value="GO_Central"/>
</dbReference>
<dbReference type="GO" id="GO:0036503">
    <property type="term" value="P:ERAD pathway"/>
    <property type="evidence" value="ECO:0000318"/>
    <property type="project" value="GO_Central"/>
</dbReference>
<dbReference type="GO" id="GO:0042026">
    <property type="term" value="P:protein refolding"/>
    <property type="evidence" value="ECO:0000318"/>
    <property type="project" value="GO_Central"/>
</dbReference>
<dbReference type="CDD" id="cd10241">
    <property type="entry name" value="ASKHA_NBD_HSP70_BiP"/>
    <property type="match status" value="1"/>
</dbReference>
<dbReference type="FunFam" id="3.30.420.40:FF:000020">
    <property type="entry name" value="Chaperone protein HscA homolog"/>
    <property type="match status" value="1"/>
</dbReference>
<dbReference type="FunFam" id="2.60.34.10:FF:000002">
    <property type="entry name" value="Heat shock 70 kDa"/>
    <property type="match status" value="1"/>
</dbReference>
<dbReference type="FunFam" id="3.90.640.10:FF:000002">
    <property type="entry name" value="Heat shock 70 kDa"/>
    <property type="match status" value="1"/>
</dbReference>
<dbReference type="FunFam" id="1.20.1270.10:FF:000040">
    <property type="entry name" value="Heat shock 70 kDa protein BIP5"/>
    <property type="match status" value="1"/>
</dbReference>
<dbReference type="FunFam" id="3.30.30.30:FF:000001">
    <property type="entry name" value="heat shock 70 kDa protein-like"/>
    <property type="match status" value="1"/>
</dbReference>
<dbReference type="FunFam" id="3.30.420.40:FF:000026">
    <property type="entry name" value="Heat shock protein 70"/>
    <property type="match status" value="1"/>
</dbReference>
<dbReference type="Gene3D" id="1.20.1270.10">
    <property type="match status" value="1"/>
</dbReference>
<dbReference type="Gene3D" id="3.30.420.40">
    <property type="match status" value="2"/>
</dbReference>
<dbReference type="Gene3D" id="3.90.640.10">
    <property type="entry name" value="Actin, Chain A, domain 4"/>
    <property type="match status" value="1"/>
</dbReference>
<dbReference type="Gene3D" id="2.60.34.10">
    <property type="entry name" value="Substrate Binding Domain Of DNAk, Chain A, domain 1"/>
    <property type="match status" value="1"/>
</dbReference>
<dbReference type="InterPro" id="IPR043129">
    <property type="entry name" value="ATPase_NBD"/>
</dbReference>
<dbReference type="InterPro" id="IPR042050">
    <property type="entry name" value="BIP_NBD"/>
</dbReference>
<dbReference type="InterPro" id="IPR018181">
    <property type="entry name" value="Heat_shock_70_CS"/>
</dbReference>
<dbReference type="InterPro" id="IPR029048">
    <property type="entry name" value="HSP70_C_sf"/>
</dbReference>
<dbReference type="InterPro" id="IPR029047">
    <property type="entry name" value="HSP70_peptide-bd_sf"/>
</dbReference>
<dbReference type="InterPro" id="IPR013126">
    <property type="entry name" value="Hsp_70_fam"/>
</dbReference>
<dbReference type="NCBIfam" id="NF001413">
    <property type="entry name" value="PRK00290.1"/>
    <property type="match status" value="1"/>
</dbReference>
<dbReference type="PANTHER" id="PTHR19375">
    <property type="entry name" value="HEAT SHOCK PROTEIN 70KDA"/>
    <property type="match status" value="1"/>
</dbReference>
<dbReference type="Pfam" id="PF00012">
    <property type="entry name" value="HSP70"/>
    <property type="match status" value="1"/>
</dbReference>
<dbReference type="PRINTS" id="PR00301">
    <property type="entry name" value="HEATSHOCK70"/>
</dbReference>
<dbReference type="SUPFAM" id="SSF53067">
    <property type="entry name" value="Actin-like ATPase domain"/>
    <property type="match status" value="2"/>
</dbReference>
<dbReference type="SUPFAM" id="SSF100934">
    <property type="entry name" value="Heat shock protein 70kD (HSP70), C-terminal subdomain"/>
    <property type="match status" value="1"/>
</dbReference>
<dbReference type="SUPFAM" id="SSF100920">
    <property type="entry name" value="Heat shock protein 70kD (HSP70), peptide-binding domain"/>
    <property type="match status" value="1"/>
</dbReference>
<dbReference type="PROSITE" id="PS00014">
    <property type="entry name" value="ER_TARGET"/>
    <property type="match status" value="1"/>
</dbReference>
<dbReference type="PROSITE" id="PS00297">
    <property type="entry name" value="HSP70_1"/>
    <property type="match status" value="1"/>
</dbReference>
<dbReference type="PROSITE" id="PS00329">
    <property type="entry name" value="HSP70_2"/>
    <property type="match status" value="1"/>
</dbReference>
<dbReference type="PROSITE" id="PS01036">
    <property type="entry name" value="HSP70_3"/>
    <property type="match status" value="1"/>
</dbReference>
<accession>Q75HQ0</accession>
<proteinExistence type="evidence at transcript level"/>
<keyword id="KW-0067">ATP-binding</keyword>
<keyword id="KW-0143">Chaperone</keyword>
<keyword id="KW-0256">Endoplasmic reticulum</keyword>
<keyword id="KW-0547">Nucleotide-binding</keyword>
<keyword id="KW-1185">Reference proteome</keyword>
<keyword id="KW-0732">Signal</keyword>
<keyword id="KW-0346">Stress response</keyword>